<sequence length="145" mass="16255">MISMLFPRSPLCTAAIVFYTCVCIPLGRLKKNGGDADAHDDDGYNLVGVMFGDKEKEEEICCPICLVEFEAEDAVTHLPRCAHLFHINCIEPWLLRGHLTCPLCRSFVLAPTPPTQNVNNAHSSSTLYLSIFFFFCIFLHLLGYL</sequence>
<comment type="catalytic activity">
    <reaction evidence="4">
        <text>S-ubiquitinyl-[E2 ubiquitin-conjugating enzyme]-L-cysteine + [acceptor protein]-L-lysine = [E2 ubiquitin-conjugating enzyme]-L-cysteine + N(6)-ubiquitinyl-[acceptor protein]-L-lysine.</text>
        <dbReference type="EC" id="2.3.2.27"/>
    </reaction>
</comment>
<comment type="pathway">
    <text>Protein modification; protein ubiquitination.</text>
</comment>
<comment type="subcellular location">
    <subcellularLocation>
        <location evidence="4">Membrane</location>
        <topology evidence="4">Single-pass membrane protein</topology>
    </subcellularLocation>
</comment>
<comment type="domain">
    <text evidence="1">The RING-type zinc finger domain mediates binding to an E2 ubiquitin-conjugating enzyme.</text>
</comment>
<comment type="similarity">
    <text evidence="4">Belongs to the RING-type zinc finger family. ATL subfamily.</text>
</comment>
<accession>Q9SZL4</accession>
<accession>A2RVT3</accession>
<feature type="signal peptide" evidence="2">
    <location>
        <begin position="1"/>
        <end position="29"/>
    </location>
</feature>
<feature type="chain" id="PRO_0000030712" description="RING-H2 finger protein ATL18">
    <location>
        <begin position="30"/>
        <end position="145"/>
    </location>
</feature>
<feature type="transmembrane region" description="Helical" evidence="2">
    <location>
        <begin position="125"/>
        <end position="145"/>
    </location>
</feature>
<feature type="zinc finger region" description="RING-type; atypical" evidence="3">
    <location>
        <begin position="62"/>
        <end position="105"/>
    </location>
</feature>
<protein>
    <recommendedName>
        <fullName>RING-H2 finger protein ATL18</fullName>
        <ecNumber evidence="4">2.3.2.27</ecNumber>
    </recommendedName>
    <alternativeName>
        <fullName evidence="4">RING-type E3 ubiquitin transferase ATL18</fullName>
    </alternativeName>
</protein>
<proteinExistence type="evidence at transcript level"/>
<evidence type="ECO:0000250" key="1"/>
<evidence type="ECO:0000255" key="2"/>
<evidence type="ECO:0000255" key="3">
    <source>
        <dbReference type="PROSITE-ProRule" id="PRU00175"/>
    </source>
</evidence>
<evidence type="ECO:0000305" key="4"/>
<name>ATL18_ARATH</name>
<dbReference type="EC" id="2.3.2.27" evidence="4"/>
<dbReference type="EMBL" id="AL035538">
    <property type="protein sequence ID" value="CAB37554.1"/>
    <property type="molecule type" value="Genomic_DNA"/>
</dbReference>
<dbReference type="EMBL" id="AL161593">
    <property type="protein sequence ID" value="CAB80479.1"/>
    <property type="molecule type" value="Genomic_DNA"/>
</dbReference>
<dbReference type="EMBL" id="CP002687">
    <property type="protein sequence ID" value="AEE86883.1"/>
    <property type="molecule type" value="Genomic_DNA"/>
</dbReference>
<dbReference type="EMBL" id="BT030074">
    <property type="protein sequence ID" value="ABN04812.1"/>
    <property type="molecule type" value="mRNA"/>
</dbReference>
<dbReference type="PIR" id="T05641">
    <property type="entry name" value="T05641"/>
</dbReference>
<dbReference type="RefSeq" id="NP_195527.1">
    <property type="nucleotide sequence ID" value="NM_119975.2"/>
</dbReference>
<dbReference type="SMR" id="Q9SZL4"/>
<dbReference type="BioGRID" id="15250">
    <property type="interactions" value="1"/>
</dbReference>
<dbReference type="STRING" id="3702.Q9SZL4"/>
<dbReference type="GlyGen" id="Q9SZL4">
    <property type="glycosylation" value="1 site"/>
</dbReference>
<dbReference type="PaxDb" id="3702-AT4G38140.1"/>
<dbReference type="EnsemblPlants" id="AT4G38140.1">
    <property type="protein sequence ID" value="AT4G38140.1"/>
    <property type="gene ID" value="AT4G38140"/>
</dbReference>
<dbReference type="GeneID" id="829970"/>
<dbReference type="Gramene" id="AT4G38140.1">
    <property type="protein sequence ID" value="AT4G38140.1"/>
    <property type="gene ID" value="AT4G38140"/>
</dbReference>
<dbReference type="KEGG" id="ath:AT4G38140"/>
<dbReference type="Araport" id="AT4G38140"/>
<dbReference type="TAIR" id="AT4G38140">
    <property type="gene designation" value="ATL100"/>
</dbReference>
<dbReference type="eggNOG" id="KOG0800">
    <property type="taxonomic scope" value="Eukaryota"/>
</dbReference>
<dbReference type="HOGENOM" id="CLU_1706729_0_0_1"/>
<dbReference type="InParanoid" id="Q9SZL4"/>
<dbReference type="OMA" id="CIEKWME"/>
<dbReference type="PhylomeDB" id="Q9SZL4"/>
<dbReference type="UniPathway" id="UPA00143"/>
<dbReference type="PRO" id="PR:Q9SZL4"/>
<dbReference type="Proteomes" id="UP000006548">
    <property type="component" value="Chromosome 4"/>
</dbReference>
<dbReference type="ExpressionAtlas" id="Q9SZL4">
    <property type="expression patterns" value="baseline and differential"/>
</dbReference>
<dbReference type="GO" id="GO:0016020">
    <property type="term" value="C:membrane"/>
    <property type="evidence" value="ECO:0007669"/>
    <property type="project" value="UniProtKB-SubCell"/>
</dbReference>
<dbReference type="GO" id="GO:0016740">
    <property type="term" value="F:transferase activity"/>
    <property type="evidence" value="ECO:0007669"/>
    <property type="project" value="UniProtKB-KW"/>
</dbReference>
<dbReference type="GO" id="GO:0008270">
    <property type="term" value="F:zinc ion binding"/>
    <property type="evidence" value="ECO:0007669"/>
    <property type="project" value="UniProtKB-KW"/>
</dbReference>
<dbReference type="GO" id="GO:0016567">
    <property type="term" value="P:protein ubiquitination"/>
    <property type="evidence" value="ECO:0007669"/>
    <property type="project" value="UniProtKB-UniPathway"/>
</dbReference>
<dbReference type="Gene3D" id="3.30.40.10">
    <property type="entry name" value="Zinc/RING finger domain, C3HC4 (zinc finger)"/>
    <property type="match status" value="1"/>
</dbReference>
<dbReference type="InterPro" id="IPR001841">
    <property type="entry name" value="Znf_RING"/>
</dbReference>
<dbReference type="InterPro" id="IPR013083">
    <property type="entry name" value="Znf_RING/FYVE/PHD"/>
</dbReference>
<dbReference type="PANTHER" id="PTHR45969">
    <property type="entry name" value="RING ZINC FINGER PROTEIN-RELATED"/>
    <property type="match status" value="1"/>
</dbReference>
<dbReference type="PANTHER" id="PTHR45969:SF9">
    <property type="entry name" value="RING-TYPE DOMAIN-CONTAINING PROTEIN"/>
    <property type="match status" value="1"/>
</dbReference>
<dbReference type="Pfam" id="PF13639">
    <property type="entry name" value="zf-RING_2"/>
    <property type="match status" value="1"/>
</dbReference>
<dbReference type="SMART" id="SM00184">
    <property type="entry name" value="RING"/>
    <property type="match status" value="1"/>
</dbReference>
<dbReference type="SUPFAM" id="SSF57850">
    <property type="entry name" value="RING/U-box"/>
    <property type="match status" value="1"/>
</dbReference>
<dbReference type="PROSITE" id="PS50089">
    <property type="entry name" value="ZF_RING_2"/>
    <property type="match status" value="1"/>
</dbReference>
<organism>
    <name type="scientific">Arabidopsis thaliana</name>
    <name type="common">Mouse-ear cress</name>
    <dbReference type="NCBI Taxonomy" id="3702"/>
    <lineage>
        <taxon>Eukaryota</taxon>
        <taxon>Viridiplantae</taxon>
        <taxon>Streptophyta</taxon>
        <taxon>Embryophyta</taxon>
        <taxon>Tracheophyta</taxon>
        <taxon>Spermatophyta</taxon>
        <taxon>Magnoliopsida</taxon>
        <taxon>eudicotyledons</taxon>
        <taxon>Gunneridae</taxon>
        <taxon>Pentapetalae</taxon>
        <taxon>rosids</taxon>
        <taxon>malvids</taxon>
        <taxon>Brassicales</taxon>
        <taxon>Brassicaceae</taxon>
        <taxon>Camelineae</taxon>
        <taxon>Arabidopsis</taxon>
    </lineage>
</organism>
<gene>
    <name type="primary">ATL18</name>
    <name type="ordered locus">At4g38140</name>
    <name type="ORF">F20D10.260</name>
</gene>
<keyword id="KW-0472">Membrane</keyword>
<keyword id="KW-0479">Metal-binding</keyword>
<keyword id="KW-1185">Reference proteome</keyword>
<keyword id="KW-0732">Signal</keyword>
<keyword id="KW-0808">Transferase</keyword>
<keyword id="KW-0812">Transmembrane</keyword>
<keyword id="KW-1133">Transmembrane helix</keyword>
<keyword id="KW-0833">Ubl conjugation pathway</keyword>
<keyword id="KW-0862">Zinc</keyword>
<keyword id="KW-0863">Zinc-finger</keyword>
<reference key="1">
    <citation type="journal article" date="1999" name="Nature">
        <title>Sequence and analysis of chromosome 4 of the plant Arabidopsis thaliana.</title>
        <authorList>
            <person name="Mayer K.F.X."/>
            <person name="Schueller C."/>
            <person name="Wambutt R."/>
            <person name="Murphy G."/>
            <person name="Volckaert G."/>
            <person name="Pohl T."/>
            <person name="Duesterhoeft A."/>
            <person name="Stiekema W."/>
            <person name="Entian K.-D."/>
            <person name="Terryn N."/>
            <person name="Harris B."/>
            <person name="Ansorge W."/>
            <person name="Brandt P."/>
            <person name="Grivell L.A."/>
            <person name="Rieger M."/>
            <person name="Weichselgartner M."/>
            <person name="de Simone V."/>
            <person name="Obermaier B."/>
            <person name="Mache R."/>
            <person name="Mueller M."/>
            <person name="Kreis M."/>
            <person name="Delseny M."/>
            <person name="Puigdomenech P."/>
            <person name="Watson M."/>
            <person name="Schmidtheini T."/>
            <person name="Reichert B."/>
            <person name="Portetelle D."/>
            <person name="Perez-Alonso M."/>
            <person name="Boutry M."/>
            <person name="Bancroft I."/>
            <person name="Vos P."/>
            <person name="Hoheisel J."/>
            <person name="Zimmermann W."/>
            <person name="Wedler H."/>
            <person name="Ridley P."/>
            <person name="Langham S.-A."/>
            <person name="McCullagh B."/>
            <person name="Bilham L."/>
            <person name="Robben J."/>
            <person name="van der Schueren J."/>
            <person name="Grymonprez B."/>
            <person name="Chuang Y.-J."/>
            <person name="Vandenbussche F."/>
            <person name="Braeken M."/>
            <person name="Weltjens I."/>
            <person name="Voet M."/>
            <person name="Bastiaens I."/>
            <person name="Aert R."/>
            <person name="Defoor E."/>
            <person name="Weitzenegger T."/>
            <person name="Bothe G."/>
            <person name="Ramsperger U."/>
            <person name="Hilbert H."/>
            <person name="Braun M."/>
            <person name="Holzer E."/>
            <person name="Brandt A."/>
            <person name="Peters S."/>
            <person name="van Staveren M."/>
            <person name="Dirkse W."/>
            <person name="Mooijman P."/>
            <person name="Klein Lankhorst R."/>
            <person name="Rose M."/>
            <person name="Hauf J."/>
            <person name="Koetter P."/>
            <person name="Berneiser S."/>
            <person name="Hempel S."/>
            <person name="Feldpausch M."/>
            <person name="Lamberth S."/>
            <person name="Van den Daele H."/>
            <person name="De Keyser A."/>
            <person name="Buysshaert C."/>
            <person name="Gielen J."/>
            <person name="Villarroel R."/>
            <person name="De Clercq R."/>
            <person name="van Montagu M."/>
            <person name="Rogers J."/>
            <person name="Cronin A."/>
            <person name="Quail M.A."/>
            <person name="Bray-Allen S."/>
            <person name="Clark L."/>
            <person name="Doggett J."/>
            <person name="Hall S."/>
            <person name="Kay M."/>
            <person name="Lennard N."/>
            <person name="McLay K."/>
            <person name="Mayes R."/>
            <person name="Pettett A."/>
            <person name="Rajandream M.A."/>
            <person name="Lyne M."/>
            <person name="Benes V."/>
            <person name="Rechmann S."/>
            <person name="Borkova D."/>
            <person name="Bloecker H."/>
            <person name="Scharfe M."/>
            <person name="Grimm M."/>
            <person name="Loehnert T.-H."/>
            <person name="Dose S."/>
            <person name="de Haan M."/>
            <person name="Maarse A.C."/>
            <person name="Schaefer M."/>
            <person name="Mueller-Auer S."/>
            <person name="Gabel C."/>
            <person name="Fuchs M."/>
            <person name="Fartmann B."/>
            <person name="Granderath K."/>
            <person name="Dauner D."/>
            <person name="Herzl A."/>
            <person name="Neumann S."/>
            <person name="Argiriou A."/>
            <person name="Vitale D."/>
            <person name="Liguori R."/>
            <person name="Piravandi E."/>
            <person name="Massenet O."/>
            <person name="Quigley F."/>
            <person name="Clabauld G."/>
            <person name="Muendlein A."/>
            <person name="Felber R."/>
            <person name="Schnabl S."/>
            <person name="Hiller R."/>
            <person name="Schmidt W."/>
            <person name="Lecharny A."/>
            <person name="Aubourg S."/>
            <person name="Chefdor F."/>
            <person name="Cooke R."/>
            <person name="Berger C."/>
            <person name="Monfort A."/>
            <person name="Casacuberta E."/>
            <person name="Gibbons T."/>
            <person name="Weber N."/>
            <person name="Vandenbol M."/>
            <person name="Bargues M."/>
            <person name="Terol J."/>
            <person name="Torres A."/>
            <person name="Perez-Perez A."/>
            <person name="Purnelle B."/>
            <person name="Bent E."/>
            <person name="Johnson S."/>
            <person name="Tacon D."/>
            <person name="Jesse T."/>
            <person name="Heijnen L."/>
            <person name="Schwarz S."/>
            <person name="Scholler P."/>
            <person name="Heber S."/>
            <person name="Francs P."/>
            <person name="Bielke C."/>
            <person name="Frishman D."/>
            <person name="Haase D."/>
            <person name="Lemcke K."/>
            <person name="Mewes H.-W."/>
            <person name="Stocker S."/>
            <person name="Zaccaria P."/>
            <person name="Bevan M."/>
            <person name="Wilson R.K."/>
            <person name="de la Bastide M."/>
            <person name="Habermann K."/>
            <person name="Parnell L."/>
            <person name="Dedhia N."/>
            <person name="Gnoj L."/>
            <person name="Schutz K."/>
            <person name="Huang E."/>
            <person name="Spiegel L."/>
            <person name="Sekhon M."/>
            <person name="Murray J."/>
            <person name="Sheet P."/>
            <person name="Cordes M."/>
            <person name="Abu-Threideh J."/>
            <person name="Stoneking T."/>
            <person name="Kalicki J."/>
            <person name="Graves T."/>
            <person name="Harmon G."/>
            <person name="Edwards J."/>
            <person name="Latreille P."/>
            <person name="Courtney L."/>
            <person name="Cloud J."/>
            <person name="Abbott A."/>
            <person name="Scott K."/>
            <person name="Johnson D."/>
            <person name="Minx P."/>
            <person name="Bentley D."/>
            <person name="Fulton B."/>
            <person name="Miller N."/>
            <person name="Greco T."/>
            <person name="Kemp K."/>
            <person name="Kramer J."/>
            <person name="Fulton L."/>
            <person name="Mardis E."/>
            <person name="Dante M."/>
            <person name="Pepin K."/>
            <person name="Hillier L.W."/>
            <person name="Nelson J."/>
            <person name="Spieth J."/>
            <person name="Ryan E."/>
            <person name="Andrews S."/>
            <person name="Geisel C."/>
            <person name="Layman D."/>
            <person name="Du H."/>
            <person name="Ali J."/>
            <person name="Berghoff A."/>
            <person name="Jones K."/>
            <person name="Drone K."/>
            <person name="Cotton M."/>
            <person name="Joshu C."/>
            <person name="Antonoiu B."/>
            <person name="Zidanic M."/>
            <person name="Strong C."/>
            <person name="Sun H."/>
            <person name="Lamar B."/>
            <person name="Yordan C."/>
            <person name="Ma P."/>
            <person name="Zhong J."/>
            <person name="Preston R."/>
            <person name="Vil D."/>
            <person name="Shekher M."/>
            <person name="Matero A."/>
            <person name="Shah R."/>
            <person name="Swaby I.K."/>
            <person name="O'Shaughnessy A."/>
            <person name="Rodriguez M."/>
            <person name="Hoffman J."/>
            <person name="Till S."/>
            <person name="Granat S."/>
            <person name="Shohdy N."/>
            <person name="Hasegawa A."/>
            <person name="Hameed A."/>
            <person name="Lodhi M."/>
            <person name="Johnson A."/>
            <person name="Chen E."/>
            <person name="Marra M.A."/>
            <person name="Martienssen R."/>
            <person name="McCombie W.R."/>
        </authorList>
    </citation>
    <scope>NUCLEOTIDE SEQUENCE [LARGE SCALE GENOMIC DNA]</scope>
    <source>
        <strain>cv. Columbia</strain>
    </source>
</reference>
<reference key="2">
    <citation type="journal article" date="2017" name="Plant J.">
        <title>Araport11: a complete reannotation of the Arabidopsis thaliana reference genome.</title>
        <authorList>
            <person name="Cheng C.Y."/>
            <person name="Krishnakumar V."/>
            <person name="Chan A.P."/>
            <person name="Thibaud-Nissen F."/>
            <person name="Schobel S."/>
            <person name="Town C.D."/>
        </authorList>
    </citation>
    <scope>GENOME REANNOTATION</scope>
    <source>
        <strain>cv. Columbia</strain>
    </source>
</reference>
<reference key="3">
    <citation type="submission" date="2007-01" db="EMBL/GenBank/DDBJ databases">
        <title>Arabidopsis ORF clones.</title>
        <authorList>
            <person name="Kim C.J."/>
            <person name="Bautista V.R."/>
            <person name="Chen H."/>
            <person name="De Los Reyes C."/>
            <person name="Wu S.Y."/>
            <person name="Ecker J.R."/>
        </authorList>
    </citation>
    <scope>NUCLEOTIDE SEQUENCE [LARGE SCALE MRNA]</scope>
    <source>
        <strain>cv. Columbia</strain>
    </source>
</reference>
<reference key="4">
    <citation type="journal article" date="2002" name="Genome Biol.">
        <title>Evaluation and classification of RING-finger domains encoded by the Arabidopsis genome.</title>
        <authorList>
            <person name="Kosarev P."/>
            <person name="Mayer K.F.X."/>
            <person name="Hardtke C.S."/>
        </authorList>
    </citation>
    <scope>GENE FAMILY ORGANIZATION</scope>
</reference>
<reference key="5">
    <citation type="journal article" date="2006" name="J. Mol. Evol.">
        <title>The ATL gene family from Arabidopsis thaliana and Oryza sativa comprises a large number of putative ubiquitin ligases of the RING-H2 type.</title>
        <authorList>
            <person name="Serrano M."/>
            <person name="Parra S."/>
            <person name="Alcaraz L.D."/>
            <person name="Guzman P."/>
        </authorList>
    </citation>
    <scope>NOMENCLATURE</scope>
    <scope>GENE FAMILY ORGANIZATION</scope>
</reference>